<comment type="function">
    <text evidence="1">Binds directly to 16S ribosomal RNA.</text>
</comment>
<comment type="similarity">
    <text evidence="1">Belongs to the bacterial ribosomal protein bS20 family.</text>
</comment>
<reference key="1">
    <citation type="journal article" date="2007" name="PLoS ONE">
        <title>A glimpse of streptococcal toxic shock syndrome from comparative genomics of S. suis 2 Chinese isolates.</title>
        <authorList>
            <person name="Chen C."/>
            <person name="Tang J."/>
            <person name="Dong W."/>
            <person name="Wang C."/>
            <person name="Feng Y."/>
            <person name="Wang J."/>
            <person name="Zheng F."/>
            <person name="Pan X."/>
            <person name="Liu D."/>
            <person name="Li M."/>
            <person name="Song Y."/>
            <person name="Zhu X."/>
            <person name="Sun H."/>
            <person name="Feng T."/>
            <person name="Guo Z."/>
            <person name="Ju A."/>
            <person name="Ge J."/>
            <person name="Dong Y."/>
            <person name="Sun W."/>
            <person name="Jiang Y."/>
            <person name="Wang J."/>
            <person name="Yan J."/>
            <person name="Yang H."/>
            <person name="Wang X."/>
            <person name="Gao G.F."/>
            <person name="Yang R."/>
            <person name="Wang J."/>
            <person name="Yu J."/>
        </authorList>
    </citation>
    <scope>NUCLEOTIDE SEQUENCE [LARGE SCALE GENOMIC DNA]</scope>
    <source>
        <strain>05ZYH33</strain>
    </source>
</reference>
<keyword id="KW-0687">Ribonucleoprotein</keyword>
<keyword id="KW-0689">Ribosomal protein</keyword>
<keyword id="KW-0694">RNA-binding</keyword>
<keyword id="KW-0699">rRNA-binding</keyword>
<gene>
    <name evidence="1" type="primary">rpsT</name>
    <name type="ordered locus">SSU05_1089</name>
</gene>
<feature type="chain" id="PRO_1000060496" description="Small ribosomal subunit protein bS20">
    <location>
        <begin position="1"/>
        <end position="82"/>
    </location>
</feature>
<proteinExistence type="inferred from homology"/>
<accession>A4VVB6</accession>
<evidence type="ECO:0000255" key="1">
    <source>
        <dbReference type="HAMAP-Rule" id="MF_00500"/>
    </source>
</evidence>
<evidence type="ECO:0000305" key="2"/>
<protein>
    <recommendedName>
        <fullName evidence="1">Small ribosomal subunit protein bS20</fullName>
    </recommendedName>
    <alternativeName>
        <fullName evidence="2">30S ribosomal protein S20</fullName>
    </alternativeName>
</protein>
<name>RS20_STRSY</name>
<organism>
    <name type="scientific">Streptococcus suis (strain 05ZYH33)</name>
    <dbReference type="NCBI Taxonomy" id="391295"/>
    <lineage>
        <taxon>Bacteria</taxon>
        <taxon>Bacillati</taxon>
        <taxon>Bacillota</taxon>
        <taxon>Bacilli</taxon>
        <taxon>Lactobacillales</taxon>
        <taxon>Streptococcaceae</taxon>
        <taxon>Streptococcus</taxon>
    </lineage>
</organism>
<dbReference type="EMBL" id="CP000407">
    <property type="protein sequence ID" value="ABP90055.1"/>
    <property type="molecule type" value="Genomic_DNA"/>
</dbReference>
<dbReference type="SMR" id="A4VVB6"/>
<dbReference type="STRING" id="391295.SSU05_1089"/>
<dbReference type="KEGG" id="ssu:SSU05_1089"/>
<dbReference type="eggNOG" id="COG0268">
    <property type="taxonomic scope" value="Bacteria"/>
</dbReference>
<dbReference type="HOGENOM" id="CLU_160655_1_1_9"/>
<dbReference type="GO" id="GO:0005829">
    <property type="term" value="C:cytosol"/>
    <property type="evidence" value="ECO:0007669"/>
    <property type="project" value="TreeGrafter"/>
</dbReference>
<dbReference type="GO" id="GO:0015935">
    <property type="term" value="C:small ribosomal subunit"/>
    <property type="evidence" value="ECO:0007669"/>
    <property type="project" value="TreeGrafter"/>
</dbReference>
<dbReference type="GO" id="GO:0070181">
    <property type="term" value="F:small ribosomal subunit rRNA binding"/>
    <property type="evidence" value="ECO:0007669"/>
    <property type="project" value="TreeGrafter"/>
</dbReference>
<dbReference type="GO" id="GO:0003735">
    <property type="term" value="F:structural constituent of ribosome"/>
    <property type="evidence" value="ECO:0007669"/>
    <property type="project" value="InterPro"/>
</dbReference>
<dbReference type="GO" id="GO:0006412">
    <property type="term" value="P:translation"/>
    <property type="evidence" value="ECO:0007669"/>
    <property type="project" value="UniProtKB-UniRule"/>
</dbReference>
<dbReference type="FunFam" id="1.20.58.110:FF:000001">
    <property type="entry name" value="30S ribosomal protein S20"/>
    <property type="match status" value="1"/>
</dbReference>
<dbReference type="Gene3D" id="1.20.58.110">
    <property type="entry name" value="Ribosomal protein S20"/>
    <property type="match status" value="1"/>
</dbReference>
<dbReference type="HAMAP" id="MF_00500">
    <property type="entry name" value="Ribosomal_bS20"/>
    <property type="match status" value="1"/>
</dbReference>
<dbReference type="InterPro" id="IPR002583">
    <property type="entry name" value="Ribosomal_bS20"/>
</dbReference>
<dbReference type="InterPro" id="IPR036510">
    <property type="entry name" value="Ribosomal_bS20_sf"/>
</dbReference>
<dbReference type="NCBIfam" id="TIGR00029">
    <property type="entry name" value="S20"/>
    <property type="match status" value="1"/>
</dbReference>
<dbReference type="PANTHER" id="PTHR33398">
    <property type="entry name" value="30S RIBOSOMAL PROTEIN S20"/>
    <property type="match status" value="1"/>
</dbReference>
<dbReference type="PANTHER" id="PTHR33398:SF1">
    <property type="entry name" value="SMALL RIBOSOMAL SUBUNIT PROTEIN BS20C"/>
    <property type="match status" value="1"/>
</dbReference>
<dbReference type="Pfam" id="PF01649">
    <property type="entry name" value="Ribosomal_S20p"/>
    <property type="match status" value="1"/>
</dbReference>
<dbReference type="SUPFAM" id="SSF46992">
    <property type="entry name" value="Ribosomal protein S20"/>
    <property type="match status" value="1"/>
</dbReference>
<sequence length="82" mass="8964">MEVKPLANIKSAIKRAELNVKQNEKNSAQKSAMRTAIKAFEANPSEELFRAASSAIDKAETKGLIHKNKASRDKARLASKLA</sequence>